<accession>Q8GIS1</accession>
<accession>Q31KB4</accession>
<sequence length="466" mass="51852">MTQAAAPQPWSDRFETALHPAIVVFNASIGFDLALIEYDLTGSQAHAQMLAEQDIISREEGEAIVAGLEQIRSEYRTGQFQPGLDAEDVHFAVERRLTELLGDVGKKLHTARSRNDQVGTDTRLYLRDRVDHIRQQLRDYQRVLLSQAEQHLETLIPGYTHLQRAQPLSLAHHLHAYLEMAERDWERLGDLRKRLNTSPLGAGALAGTTFPIDRQRTAALLGFERIYANSLDAVSDRDSLVEFLAAASLIMVHLSRLAEEVILWASEEFRFVRLSDRCATGSSIMPQKKNPDVPELVRGKTGRVFGHLQALLVVLKGLPLAYNKDLQEDKEGLFDAVQTVESCLEAMTILFAEGLSFQPDRLAAAVEADFSNATDVADYLAARGVPFREAYNLVGRVVRTCLEQGKLLKDLSLAEWQALHPQFEADIYTAIAPQQVVAARNSLGGTGFEQVRSALASVRQRLEATC</sequence>
<reference key="1">
    <citation type="submission" date="2002-11" db="EMBL/GenBank/DDBJ databases">
        <title>Synechococcus elongatus PCC7942 genome sequence, cosmid 7H1 and 2E8.</title>
        <authorList>
            <person name="Holtman C.K."/>
            <person name="Socias T."/>
            <person name="Mohler B.J."/>
            <person name="Chen Y."/>
            <person name="Min H."/>
            <person name="Golden S.S."/>
            <person name="Youderian P."/>
            <person name="Sandoval P."/>
            <person name="Gonzalez A."/>
            <person name="Salinas I."/>
        </authorList>
    </citation>
    <scope>NUCLEOTIDE SEQUENCE [GENOMIC DNA]</scope>
</reference>
<reference key="2">
    <citation type="submission" date="2005-08" db="EMBL/GenBank/DDBJ databases">
        <title>Complete sequence of chromosome 1 of Synechococcus elongatus PCC 7942.</title>
        <authorList>
            <consortium name="US DOE Joint Genome Institute"/>
            <person name="Copeland A."/>
            <person name="Lucas S."/>
            <person name="Lapidus A."/>
            <person name="Barry K."/>
            <person name="Detter J.C."/>
            <person name="Glavina T."/>
            <person name="Hammon N."/>
            <person name="Israni S."/>
            <person name="Pitluck S."/>
            <person name="Schmutz J."/>
            <person name="Larimer F."/>
            <person name="Land M."/>
            <person name="Kyrpides N."/>
            <person name="Lykidis A."/>
            <person name="Golden S."/>
            <person name="Richardson P."/>
        </authorList>
    </citation>
    <scope>NUCLEOTIDE SEQUENCE [LARGE SCALE GENOMIC DNA]</scope>
    <source>
        <strain>ATCC 33912 / PCC 7942 / FACHB-805</strain>
    </source>
</reference>
<name>ARLY_SYNE7</name>
<dbReference type="EC" id="4.3.2.1" evidence="1"/>
<dbReference type="EMBL" id="U30252">
    <property type="protein sequence ID" value="AAN71789.1"/>
    <property type="molecule type" value="Genomic_DNA"/>
</dbReference>
<dbReference type="EMBL" id="CP000100">
    <property type="protein sequence ID" value="ABB58505.1"/>
    <property type="status" value="ALT_INIT"/>
    <property type="molecule type" value="Genomic_DNA"/>
</dbReference>
<dbReference type="RefSeq" id="WP_039755911.1">
    <property type="nucleotide sequence ID" value="NZ_JACJTX010000001.1"/>
</dbReference>
<dbReference type="SMR" id="Q8GIS1"/>
<dbReference type="STRING" id="1140.Synpcc7942_2475"/>
<dbReference type="PaxDb" id="1140-Synpcc7942_2475"/>
<dbReference type="GeneID" id="72431368"/>
<dbReference type="KEGG" id="syf:Synpcc7942_2475"/>
<dbReference type="eggNOG" id="COG0165">
    <property type="taxonomic scope" value="Bacteria"/>
</dbReference>
<dbReference type="HOGENOM" id="CLU_027272_2_3_3"/>
<dbReference type="OrthoDB" id="9769623at2"/>
<dbReference type="BioCyc" id="SYNEL:SYNPCC7942_2475-MONOMER"/>
<dbReference type="UniPathway" id="UPA00068">
    <property type="reaction ID" value="UER00114"/>
</dbReference>
<dbReference type="Proteomes" id="UP000889800">
    <property type="component" value="Chromosome"/>
</dbReference>
<dbReference type="GO" id="GO:0005829">
    <property type="term" value="C:cytosol"/>
    <property type="evidence" value="ECO:0007669"/>
    <property type="project" value="TreeGrafter"/>
</dbReference>
<dbReference type="GO" id="GO:0004056">
    <property type="term" value="F:argininosuccinate lyase activity"/>
    <property type="evidence" value="ECO:0007669"/>
    <property type="project" value="UniProtKB-UniRule"/>
</dbReference>
<dbReference type="GO" id="GO:0042450">
    <property type="term" value="P:arginine biosynthetic process via ornithine"/>
    <property type="evidence" value="ECO:0007669"/>
    <property type="project" value="InterPro"/>
</dbReference>
<dbReference type="GO" id="GO:0006526">
    <property type="term" value="P:L-arginine biosynthetic process"/>
    <property type="evidence" value="ECO:0007669"/>
    <property type="project" value="UniProtKB-UniRule"/>
</dbReference>
<dbReference type="CDD" id="cd01359">
    <property type="entry name" value="Argininosuccinate_lyase"/>
    <property type="match status" value="1"/>
</dbReference>
<dbReference type="FunFam" id="1.10.275.10:FF:000002">
    <property type="entry name" value="Argininosuccinate lyase"/>
    <property type="match status" value="1"/>
</dbReference>
<dbReference type="FunFam" id="1.10.40.30:FF:000001">
    <property type="entry name" value="Argininosuccinate lyase"/>
    <property type="match status" value="1"/>
</dbReference>
<dbReference type="FunFam" id="1.20.200.10:FF:000015">
    <property type="entry name" value="argininosuccinate lyase isoform X2"/>
    <property type="match status" value="1"/>
</dbReference>
<dbReference type="Gene3D" id="1.10.40.30">
    <property type="entry name" value="Fumarase/aspartase (C-terminal domain)"/>
    <property type="match status" value="1"/>
</dbReference>
<dbReference type="Gene3D" id="1.20.200.10">
    <property type="entry name" value="Fumarase/aspartase (Central domain)"/>
    <property type="match status" value="1"/>
</dbReference>
<dbReference type="Gene3D" id="1.10.275.10">
    <property type="entry name" value="Fumarase/aspartase (N-terminal domain)"/>
    <property type="match status" value="1"/>
</dbReference>
<dbReference type="HAMAP" id="MF_00006">
    <property type="entry name" value="Arg_succ_lyase"/>
    <property type="match status" value="1"/>
</dbReference>
<dbReference type="InterPro" id="IPR029419">
    <property type="entry name" value="Arg_succ_lyase_C"/>
</dbReference>
<dbReference type="InterPro" id="IPR009049">
    <property type="entry name" value="Argininosuccinate_lyase"/>
</dbReference>
<dbReference type="InterPro" id="IPR024083">
    <property type="entry name" value="Fumarase/histidase_N"/>
</dbReference>
<dbReference type="InterPro" id="IPR020557">
    <property type="entry name" value="Fumarate_lyase_CS"/>
</dbReference>
<dbReference type="InterPro" id="IPR000362">
    <property type="entry name" value="Fumarate_lyase_fam"/>
</dbReference>
<dbReference type="InterPro" id="IPR022761">
    <property type="entry name" value="Fumarate_lyase_N"/>
</dbReference>
<dbReference type="InterPro" id="IPR008948">
    <property type="entry name" value="L-Aspartase-like"/>
</dbReference>
<dbReference type="NCBIfam" id="TIGR00838">
    <property type="entry name" value="argH"/>
    <property type="match status" value="1"/>
</dbReference>
<dbReference type="PANTHER" id="PTHR43814">
    <property type="entry name" value="ARGININOSUCCINATE LYASE"/>
    <property type="match status" value="1"/>
</dbReference>
<dbReference type="PANTHER" id="PTHR43814:SF1">
    <property type="entry name" value="ARGININOSUCCINATE LYASE"/>
    <property type="match status" value="1"/>
</dbReference>
<dbReference type="Pfam" id="PF14698">
    <property type="entry name" value="ASL_C2"/>
    <property type="match status" value="1"/>
</dbReference>
<dbReference type="Pfam" id="PF00206">
    <property type="entry name" value="Lyase_1"/>
    <property type="match status" value="1"/>
</dbReference>
<dbReference type="PRINTS" id="PR00145">
    <property type="entry name" value="ARGSUCLYASE"/>
</dbReference>
<dbReference type="PRINTS" id="PR00149">
    <property type="entry name" value="FUMRATELYASE"/>
</dbReference>
<dbReference type="SUPFAM" id="SSF48557">
    <property type="entry name" value="L-aspartase-like"/>
    <property type="match status" value="1"/>
</dbReference>
<dbReference type="PROSITE" id="PS00163">
    <property type="entry name" value="FUMARATE_LYASES"/>
    <property type="match status" value="1"/>
</dbReference>
<evidence type="ECO:0000255" key="1">
    <source>
        <dbReference type="HAMAP-Rule" id="MF_00006"/>
    </source>
</evidence>
<evidence type="ECO:0000305" key="2"/>
<feature type="chain" id="PRO_0000137839" description="Argininosuccinate lyase">
    <location>
        <begin position="1"/>
        <end position="466"/>
    </location>
</feature>
<gene>
    <name evidence="1" type="primary">argH</name>
    <name type="ordered locus">Synpcc7942_2475</name>
    <name type="ORF">seb0051</name>
</gene>
<keyword id="KW-0028">Amino-acid biosynthesis</keyword>
<keyword id="KW-0055">Arginine biosynthesis</keyword>
<keyword id="KW-0963">Cytoplasm</keyword>
<keyword id="KW-0456">Lyase</keyword>
<keyword id="KW-1185">Reference proteome</keyword>
<protein>
    <recommendedName>
        <fullName evidence="1">Argininosuccinate lyase</fullName>
        <shortName evidence="1">ASAL</shortName>
        <ecNumber evidence="1">4.3.2.1</ecNumber>
    </recommendedName>
    <alternativeName>
        <fullName evidence="1">Arginosuccinase</fullName>
    </alternativeName>
</protein>
<proteinExistence type="inferred from homology"/>
<comment type="catalytic activity">
    <reaction evidence="1">
        <text>2-(N(omega)-L-arginino)succinate = fumarate + L-arginine</text>
        <dbReference type="Rhea" id="RHEA:24020"/>
        <dbReference type="ChEBI" id="CHEBI:29806"/>
        <dbReference type="ChEBI" id="CHEBI:32682"/>
        <dbReference type="ChEBI" id="CHEBI:57472"/>
        <dbReference type="EC" id="4.3.2.1"/>
    </reaction>
</comment>
<comment type="pathway">
    <text evidence="1">Amino-acid biosynthesis; L-arginine biosynthesis; L-arginine from L-ornithine and carbamoyl phosphate: step 3/3.</text>
</comment>
<comment type="subcellular location">
    <subcellularLocation>
        <location evidence="1">Cytoplasm</location>
    </subcellularLocation>
</comment>
<comment type="similarity">
    <text evidence="1">Belongs to the lyase 1 family. Argininosuccinate lyase subfamily.</text>
</comment>
<comment type="sequence caution" evidence="2">
    <conflict type="erroneous initiation">
        <sequence resource="EMBL-CDS" id="ABB58505"/>
    </conflict>
</comment>
<organism>
    <name type="scientific">Synechococcus elongatus (strain ATCC 33912 / PCC 7942 / FACHB-805)</name>
    <name type="common">Anacystis nidulans R2</name>
    <dbReference type="NCBI Taxonomy" id="1140"/>
    <lineage>
        <taxon>Bacteria</taxon>
        <taxon>Bacillati</taxon>
        <taxon>Cyanobacteriota</taxon>
        <taxon>Cyanophyceae</taxon>
        <taxon>Synechococcales</taxon>
        <taxon>Synechococcaceae</taxon>
        <taxon>Synechococcus</taxon>
    </lineage>
</organism>